<organism>
    <name type="scientific">Mycobacterium tuberculosis (strain CDC 1551 / Oshkosh)</name>
    <dbReference type="NCBI Taxonomy" id="83331"/>
    <lineage>
        <taxon>Bacteria</taxon>
        <taxon>Bacillati</taxon>
        <taxon>Actinomycetota</taxon>
        <taxon>Actinomycetes</taxon>
        <taxon>Mycobacteriales</taxon>
        <taxon>Mycobacteriaceae</taxon>
        <taxon>Mycobacterium</taxon>
        <taxon>Mycobacterium tuberculosis complex</taxon>
    </lineage>
</organism>
<gene>
    <name type="ordered locus">MT2708</name>
</gene>
<accession>P9WL60</accession>
<accession>L0TA76</accession>
<accession>P65033</accession>
<accession>P71931</accession>
<keyword id="KW-1185">Reference proteome</keyword>
<feature type="chain" id="PRO_0000427535" description="Uncharacterized protein MT2708">
    <location>
        <begin position="1"/>
        <end position="93"/>
    </location>
</feature>
<reference key="1">
    <citation type="journal article" date="2002" name="J. Bacteriol.">
        <title>Whole-genome comparison of Mycobacterium tuberculosis clinical and laboratory strains.</title>
        <authorList>
            <person name="Fleischmann R.D."/>
            <person name="Alland D."/>
            <person name="Eisen J.A."/>
            <person name="Carpenter L."/>
            <person name="White O."/>
            <person name="Peterson J.D."/>
            <person name="DeBoy R.T."/>
            <person name="Dodson R.J."/>
            <person name="Gwinn M.L."/>
            <person name="Haft D.H."/>
            <person name="Hickey E.K."/>
            <person name="Kolonay J.F."/>
            <person name="Nelson W.C."/>
            <person name="Umayam L.A."/>
            <person name="Ermolaeva M.D."/>
            <person name="Salzberg S.L."/>
            <person name="Delcher A."/>
            <person name="Utterback T.R."/>
            <person name="Weidman J.F."/>
            <person name="Khouri H.M."/>
            <person name="Gill J."/>
            <person name="Mikula A."/>
            <person name="Bishai W."/>
            <person name="Jacobs W.R. Jr."/>
            <person name="Venter J.C."/>
            <person name="Fraser C.M."/>
        </authorList>
    </citation>
    <scope>NUCLEOTIDE SEQUENCE [LARGE SCALE GENOMIC DNA]</scope>
    <source>
        <strain>CDC 1551 / Oshkosh</strain>
    </source>
</reference>
<name>Y2632_MYCTO</name>
<proteinExistence type="predicted"/>
<sequence>MTDSEHVGKTCQIDVLIEEHDERTRAKARLSWAGRQMVGVGLARLDPADEPVAQIGDELAIARALSDLANQLFALTSSDIEASTHQPVTGLHH</sequence>
<evidence type="ECO:0000305" key="1"/>
<dbReference type="EMBL" id="AE000516">
    <property type="protein sequence ID" value="AAK47023.1"/>
    <property type="molecule type" value="Genomic_DNA"/>
</dbReference>
<dbReference type="PIR" id="D70963">
    <property type="entry name" value="D70963"/>
</dbReference>
<dbReference type="RefSeq" id="WP_003413619.1">
    <property type="nucleotide sequence ID" value="NZ_KK341227.1"/>
</dbReference>
<dbReference type="SMR" id="P9WL60"/>
<dbReference type="KEGG" id="mtc:MT2708"/>
<dbReference type="PATRIC" id="fig|83331.31.peg.2919"/>
<dbReference type="HOGENOM" id="CLU_161984_0_0_11"/>
<dbReference type="Proteomes" id="UP000001020">
    <property type="component" value="Chromosome"/>
</dbReference>
<dbReference type="Gene3D" id="3.30.160.240">
    <property type="entry name" value="Rv1738"/>
    <property type="match status" value="1"/>
</dbReference>
<dbReference type="InterPro" id="IPR015057">
    <property type="entry name" value="Rv2632c-like"/>
</dbReference>
<dbReference type="InterPro" id="IPR038070">
    <property type="entry name" value="Rv2632c-like_sf"/>
</dbReference>
<dbReference type="Pfam" id="PF08962">
    <property type="entry name" value="Rv2632c-like"/>
    <property type="match status" value="1"/>
</dbReference>
<dbReference type="SUPFAM" id="SSF143212">
    <property type="entry name" value="Rv2632c-like"/>
    <property type="match status" value="1"/>
</dbReference>
<comment type="similarity">
    <text evidence="1">To M.tuberculosis Rv1738.</text>
</comment>
<protein>
    <recommendedName>
        <fullName>Uncharacterized protein MT2708</fullName>
    </recommendedName>
</protein>